<dbReference type="EMBL" id="BC048020">
    <property type="protein sequence ID" value="AAH48020.1"/>
    <property type="molecule type" value="mRNA"/>
</dbReference>
<dbReference type="RefSeq" id="NP_001079705.1">
    <property type="nucleotide sequence ID" value="NM_001086236.1"/>
</dbReference>
<dbReference type="SMR" id="Q801P0"/>
<dbReference type="GeneID" id="379392"/>
<dbReference type="KEGG" id="xla:379392"/>
<dbReference type="AGR" id="Xenbase:XB-GENE-6256064"/>
<dbReference type="CTD" id="379392"/>
<dbReference type="Xenbase" id="XB-GENE-6256064">
    <property type="gene designation" value="lmo4.2.S"/>
</dbReference>
<dbReference type="OMA" id="LQHPANM"/>
<dbReference type="OrthoDB" id="6352355at2759"/>
<dbReference type="Proteomes" id="UP000186698">
    <property type="component" value="Chromosome 8S"/>
</dbReference>
<dbReference type="Bgee" id="379392">
    <property type="expression patterns" value="Expressed in heart and 19 other cell types or tissues"/>
</dbReference>
<dbReference type="GO" id="GO:0046872">
    <property type="term" value="F:metal ion binding"/>
    <property type="evidence" value="ECO:0007669"/>
    <property type="project" value="UniProtKB-KW"/>
</dbReference>
<dbReference type="GO" id="GO:0003712">
    <property type="term" value="F:transcription coregulator activity"/>
    <property type="evidence" value="ECO:0000250"/>
    <property type="project" value="UniProtKB"/>
</dbReference>
<dbReference type="GO" id="GO:0030154">
    <property type="term" value="P:cell differentiation"/>
    <property type="evidence" value="ECO:0007669"/>
    <property type="project" value="UniProtKB-KW"/>
</dbReference>
<dbReference type="GO" id="GO:0007369">
    <property type="term" value="P:gastrulation"/>
    <property type="evidence" value="ECO:0007669"/>
    <property type="project" value="UniProtKB-KW"/>
</dbReference>
<dbReference type="GO" id="GO:0007498">
    <property type="term" value="P:mesoderm development"/>
    <property type="evidence" value="ECO:0000250"/>
    <property type="project" value="UniProtKB"/>
</dbReference>
<dbReference type="GO" id="GO:0045665">
    <property type="term" value="P:negative regulation of neuron differentiation"/>
    <property type="evidence" value="ECO:0000250"/>
    <property type="project" value="UniProtKB"/>
</dbReference>
<dbReference type="GO" id="GO:0007399">
    <property type="term" value="P:nervous system development"/>
    <property type="evidence" value="ECO:0007669"/>
    <property type="project" value="UniProtKB-KW"/>
</dbReference>
<dbReference type="GO" id="GO:0045944">
    <property type="term" value="P:positive regulation of transcription by RNA polymerase II"/>
    <property type="evidence" value="ECO:0000250"/>
    <property type="project" value="UniProtKB"/>
</dbReference>
<dbReference type="CDD" id="cd09386">
    <property type="entry name" value="LIM1_LMO4"/>
    <property type="match status" value="1"/>
</dbReference>
<dbReference type="CDD" id="cd09387">
    <property type="entry name" value="LIM2_LMO4"/>
    <property type="match status" value="1"/>
</dbReference>
<dbReference type="FunFam" id="2.10.110.10:FF:000015">
    <property type="entry name" value="LIM domain only 3"/>
    <property type="match status" value="1"/>
</dbReference>
<dbReference type="FunFam" id="2.10.110.10:FF:000051">
    <property type="entry name" value="LIM domain transcription factor LMO4"/>
    <property type="match status" value="1"/>
</dbReference>
<dbReference type="Gene3D" id="2.10.110.10">
    <property type="entry name" value="Cysteine Rich Protein"/>
    <property type="match status" value="2"/>
</dbReference>
<dbReference type="InterPro" id="IPR050945">
    <property type="entry name" value="LMO_RBTN_TF"/>
</dbReference>
<dbReference type="InterPro" id="IPR001781">
    <property type="entry name" value="Znf_LIM"/>
</dbReference>
<dbReference type="PANTHER" id="PTHR45787">
    <property type="entry name" value="LD11652P"/>
    <property type="match status" value="1"/>
</dbReference>
<dbReference type="PANTHER" id="PTHR45787:SF8">
    <property type="entry name" value="LIM DOMAIN ONLY 4-RELATED"/>
    <property type="match status" value="1"/>
</dbReference>
<dbReference type="Pfam" id="PF00412">
    <property type="entry name" value="LIM"/>
    <property type="match status" value="2"/>
</dbReference>
<dbReference type="SMART" id="SM00132">
    <property type="entry name" value="LIM"/>
    <property type="match status" value="2"/>
</dbReference>
<dbReference type="SUPFAM" id="SSF57716">
    <property type="entry name" value="Glucocorticoid receptor-like (DNA-binding domain)"/>
    <property type="match status" value="4"/>
</dbReference>
<dbReference type="PROSITE" id="PS00478">
    <property type="entry name" value="LIM_DOMAIN_1"/>
    <property type="match status" value="2"/>
</dbReference>
<dbReference type="PROSITE" id="PS50023">
    <property type="entry name" value="LIM_DOMAIN_2"/>
    <property type="match status" value="2"/>
</dbReference>
<organism>
    <name type="scientific">Xenopus laevis</name>
    <name type="common">African clawed frog</name>
    <dbReference type="NCBI Taxonomy" id="8355"/>
    <lineage>
        <taxon>Eukaryota</taxon>
        <taxon>Metazoa</taxon>
        <taxon>Chordata</taxon>
        <taxon>Craniata</taxon>
        <taxon>Vertebrata</taxon>
        <taxon>Euteleostomi</taxon>
        <taxon>Amphibia</taxon>
        <taxon>Batrachia</taxon>
        <taxon>Anura</taxon>
        <taxon>Pipoidea</taxon>
        <taxon>Pipidae</taxon>
        <taxon>Xenopodinae</taxon>
        <taxon>Xenopus</taxon>
        <taxon>Xenopus</taxon>
    </lineage>
</organism>
<protein>
    <recommendedName>
        <fullName>LIM domain transcription factor LMO4-B</fullName>
    </recommendedName>
    <alternativeName>
        <fullName>LIM domain only protein 4-B</fullName>
        <shortName>LMO-4-B</shortName>
    </alternativeName>
</protein>
<gene>
    <name type="primary">lmo4-b</name>
</gene>
<evidence type="ECO:0000250" key="1">
    <source>
        <dbReference type="UniProtKB" id="Q8AW92"/>
    </source>
</evidence>
<evidence type="ECO:0000255" key="2">
    <source>
        <dbReference type="PROSITE-ProRule" id="PRU00125"/>
    </source>
</evidence>
<evidence type="ECO:0000256" key="3">
    <source>
        <dbReference type="SAM" id="MobiDB-lite"/>
    </source>
</evidence>
<evidence type="ECO:0000312" key="4">
    <source>
        <dbReference type="EMBL" id="AAH48020.1"/>
    </source>
</evidence>
<name>LMO4B_XENLA</name>
<keyword id="KW-0217">Developmental protein</keyword>
<keyword id="KW-0221">Differentiation</keyword>
<keyword id="KW-0306">Gastrulation</keyword>
<keyword id="KW-0440">LIM domain</keyword>
<keyword id="KW-0479">Metal-binding</keyword>
<keyword id="KW-0524">Neurogenesis</keyword>
<keyword id="KW-1185">Reference proteome</keyword>
<keyword id="KW-0677">Repeat</keyword>
<keyword id="KW-0804">Transcription</keyword>
<keyword id="KW-0805">Transcription regulation</keyword>
<keyword id="KW-0862">Zinc</keyword>
<feature type="chain" id="PRO_0000317222" description="LIM domain transcription factor LMO4-B">
    <location>
        <begin position="1"/>
        <end position="171"/>
    </location>
</feature>
<feature type="domain" description="LIM zinc-binding 1" evidence="2">
    <location>
        <begin position="22"/>
        <end position="84"/>
    </location>
</feature>
<feature type="domain" description="LIM zinc-binding 2" evidence="2">
    <location>
        <begin position="86"/>
        <end position="148"/>
    </location>
</feature>
<feature type="region of interest" description="Disordered" evidence="3">
    <location>
        <begin position="1"/>
        <end position="20"/>
    </location>
</feature>
<feature type="compositionally biased region" description="Polar residues" evidence="3">
    <location>
        <begin position="1"/>
        <end position="19"/>
    </location>
</feature>
<proteinExistence type="evidence at transcript level"/>
<reference evidence="4" key="1">
    <citation type="submission" date="2003-03" db="EMBL/GenBank/DDBJ databases">
        <authorList>
            <consortium name="NIH - Xenopus Gene Collection (XGC) project"/>
        </authorList>
    </citation>
    <scope>NUCLEOTIDE SEQUENCE [LARGE SCALE MRNA]</scope>
    <source>
        <tissue evidence="4">Tail bud</tissue>
    </source>
</reference>
<sequence length="171" mass="18697">MVNNRISESTTTAVSNNGSPPKACAGCGGKIADRFLLYSMDRYWHTRCLKCSCCQAQLGEIGTSCYTKSGMILCRNDYIRLFGNSGACNACGQSIPASEMVMRAQGSVYHLKCFTCATCRNRLVPGDRFHYVNGTIFCEHDRPTGLLNGHLNPLQSNPLQGSPMLPDQKVC</sequence>
<comment type="function">
    <text evidence="1">Acts as a positive cofactor of GATA transcription factors to establish the identity of the ventral mesoderm during gastrulation. Down-regulation in the dorsal mesoderm is necessary for the proper formation of this territory since, when present, lmo4 may bind ldb1 and restrict the availability of this cofactor for Spemman organizer transcription factors. At neurula stages, suppresses primary neuron differentiation and modulates gene expression at the Isthmic Organizer of the midbrain-hindbrain boundary (By similarity).</text>
</comment>
<accession>Q801P0</accession>